<proteinExistence type="inferred from homology"/>
<comment type="cofactor">
    <cofactor evidence="1">
        <name>Zn(2+)</name>
        <dbReference type="ChEBI" id="CHEBI:29105"/>
    </cofactor>
    <text evidence="1">Binds 1 zinc ion.</text>
</comment>
<comment type="subcellular location">
    <subcellularLocation>
        <location evidence="1">Cytoplasm</location>
    </subcellularLocation>
</comment>
<comment type="similarity">
    <text evidence="1">Belongs to the SprT family.</text>
</comment>
<name>SPRTL_STRPJ</name>
<gene>
    <name type="ordered locus">SPN23F08300</name>
</gene>
<keyword id="KW-0963">Cytoplasm</keyword>
<keyword id="KW-0479">Metal-binding</keyword>
<keyword id="KW-0862">Zinc</keyword>
<sequence length="149" mass="17974">MKLTDYVKQVSLEDFGRAFIHHVQWNRRLRSTGGRFFPKDGHLDFNPKVYQKLGMEVFRKIVRHELCHYHLYFQGKGYQHKDRDFKELLKAVDGLRFVPSLPNSNSKPLKLYRCQSCQQRYQRKRRIDTKRYRCGLCRGKLLLINQPED</sequence>
<feature type="chain" id="PRO_1000148327" description="Protein SprT-like">
    <location>
        <begin position="1"/>
        <end position="149"/>
    </location>
</feature>
<feature type="domain" description="SprT-like" evidence="1">
    <location>
        <begin position="5"/>
        <end position="143"/>
    </location>
</feature>
<feature type="active site" evidence="1">
    <location>
        <position position="65"/>
    </location>
</feature>
<feature type="binding site" evidence="1">
    <location>
        <position position="64"/>
    </location>
    <ligand>
        <name>Zn(2+)</name>
        <dbReference type="ChEBI" id="CHEBI:29105"/>
    </ligand>
</feature>
<feature type="binding site" evidence="1">
    <location>
        <position position="68"/>
    </location>
    <ligand>
        <name>Zn(2+)</name>
        <dbReference type="ChEBI" id="CHEBI:29105"/>
    </ligand>
</feature>
<organism>
    <name type="scientific">Streptococcus pneumoniae (strain ATCC 700669 / Spain 23F-1)</name>
    <dbReference type="NCBI Taxonomy" id="561276"/>
    <lineage>
        <taxon>Bacteria</taxon>
        <taxon>Bacillati</taxon>
        <taxon>Bacillota</taxon>
        <taxon>Bacilli</taxon>
        <taxon>Lactobacillales</taxon>
        <taxon>Streptococcaceae</taxon>
        <taxon>Streptococcus</taxon>
    </lineage>
</organism>
<accession>B8ZP15</accession>
<evidence type="ECO:0000255" key="1">
    <source>
        <dbReference type="HAMAP-Rule" id="MF_00745"/>
    </source>
</evidence>
<reference key="1">
    <citation type="journal article" date="2009" name="J. Bacteriol.">
        <title>Role of conjugative elements in the evolution of the multidrug-resistant pandemic clone Streptococcus pneumoniae Spain23F ST81.</title>
        <authorList>
            <person name="Croucher N.J."/>
            <person name="Walker D."/>
            <person name="Romero P."/>
            <person name="Lennard N."/>
            <person name="Paterson G.K."/>
            <person name="Bason N.C."/>
            <person name="Mitchell A.M."/>
            <person name="Quail M.A."/>
            <person name="Andrew P.W."/>
            <person name="Parkhill J."/>
            <person name="Bentley S.D."/>
            <person name="Mitchell T.J."/>
        </authorList>
    </citation>
    <scope>NUCLEOTIDE SEQUENCE [LARGE SCALE GENOMIC DNA]</scope>
    <source>
        <strain>ATCC 700669 / Spain 23F-1</strain>
    </source>
</reference>
<protein>
    <recommendedName>
        <fullName evidence="1">Protein SprT-like</fullName>
    </recommendedName>
</protein>
<dbReference type="EMBL" id="FM211187">
    <property type="protein sequence ID" value="CAR68664.1"/>
    <property type="molecule type" value="Genomic_DNA"/>
</dbReference>
<dbReference type="RefSeq" id="WP_000778576.1">
    <property type="nucleotide sequence ID" value="NC_011900.1"/>
</dbReference>
<dbReference type="KEGG" id="sne:SPN23F08300"/>
<dbReference type="HOGENOM" id="CLU_123820_0_0_9"/>
<dbReference type="GO" id="GO:0005737">
    <property type="term" value="C:cytoplasm"/>
    <property type="evidence" value="ECO:0007669"/>
    <property type="project" value="UniProtKB-SubCell"/>
</dbReference>
<dbReference type="GO" id="GO:0008270">
    <property type="term" value="F:zinc ion binding"/>
    <property type="evidence" value="ECO:0007669"/>
    <property type="project" value="UniProtKB-UniRule"/>
</dbReference>
<dbReference type="GO" id="GO:0006950">
    <property type="term" value="P:response to stress"/>
    <property type="evidence" value="ECO:0007669"/>
    <property type="project" value="UniProtKB-ARBA"/>
</dbReference>
<dbReference type="HAMAP" id="MF_00745">
    <property type="entry name" value="SprT_like"/>
    <property type="match status" value="1"/>
</dbReference>
<dbReference type="InterPro" id="IPR006640">
    <property type="entry name" value="SprT-like_domain"/>
</dbReference>
<dbReference type="InterPro" id="IPR035240">
    <property type="entry name" value="SprT_Zn_ribbon"/>
</dbReference>
<dbReference type="InterPro" id="IPR023524">
    <property type="entry name" value="Uncharacterised_SprT-like"/>
</dbReference>
<dbReference type="NCBIfam" id="NF003339">
    <property type="entry name" value="PRK04351.1"/>
    <property type="match status" value="1"/>
</dbReference>
<dbReference type="Pfam" id="PF10263">
    <property type="entry name" value="SprT-like"/>
    <property type="match status" value="1"/>
</dbReference>
<dbReference type="Pfam" id="PF17283">
    <property type="entry name" value="Zn_ribbon_SprT"/>
    <property type="match status" value="1"/>
</dbReference>
<dbReference type="SMART" id="SM00731">
    <property type="entry name" value="SprT"/>
    <property type="match status" value="1"/>
</dbReference>